<evidence type="ECO:0000255" key="1">
    <source>
        <dbReference type="HAMAP-Rule" id="MF_01529"/>
    </source>
</evidence>
<reference key="1">
    <citation type="journal article" date="2009" name="BMC Genomics">
        <title>Pseudogene accumulation in the evolutionary histories of Salmonella enterica serovars Paratyphi A and Typhi.</title>
        <authorList>
            <person name="Holt K.E."/>
            <person name="Thomson N.R."/>
            <person name="Wain J."/>
            <person name="Langridge G.C."/>
            <person name="Hasan R."/>
            <person name="Bhutta Z.A."/>
            <person name="Quail M.A."/>
            <person name="Norbertczak H."/>
            <person name="Walker D."/>
            <person name="Simmonds M."/>
            <person name="White B."/>
            <person name="Bason N."/>
            <person name="Mungall K."/>
            <person name="Dougan G."/>
            <person name="Parkhill J."/>
        </authorList>
    </citation>
    <scope>NUCLEOTIDE SEQUENCE [LARGE SCALE GENOMIC DNA]</scope>
    <source>
        <strain>AKU_12601</strain>
    </source>
</reference>
<sequence length="402" mass="44384">MSRVSQARNLGKYFLLIDNMLVVLGFFVVFPLISIRFVDQMGWAAVMVGIALGLRQFIQQGLGIFGGAIADRFGAKPMIVTGMLMRAAGFATMGIAHEPWLLWFSCFLSGLGGTLFDPPRSALVVKLIRPEQRGRFFSLLMMQDSAGAVIGALLGSWLLQYDFRLVCATGAILFILCALFNAWLLPAWKLSTVRTPVREGMRRVMSDKRFVTYVLTLAGYYMLAVQVMLMLPIMVNDIAGSPAAVKWMYAIEACLSLTLLYPIARWSEKRFRLEHRLMAGLLVMSLSMLPIGMVGNLQQLFTLICAFYIGSVIAEPARETLSASLADARARGSYMGFSRLGLAIGGAIGYIGGGWLFDMGKALAQPELPWMMLGIIGFITFLALGWQFSHKRTPRRMLEPGA</sequence>
<accession>B5BBC3</accession>
<protein>
    <recommendedName>
        <fullName evidence="1">Multidrug resistance protein MdtH</fullName>
    </recommendedName>
</protein>
<comment type="subcellular location">
    <subcellularLocation>
        <location evidence="1">Cell inner membrane</location>
        <topology evidence="1">Multi-pass membrane protein</topology>
    </subcellularLocation>
</comment>
<comment type="similarity">
    <text evidence="1">Belongs to the major facilitator superfamily. DHA1 family. MdtH (TC 2.A.1.2.21) subfamily.</text>
</comment>
<name>MDTH_SALPK</name>
<gene>
    <name evidence="1" type="primary">mdtH</name>
    <name type="ordered locus">SSPA1567</name>
</gene>
<keyword id="KW-0997">Cell inner membrane</keyword>
<keyword id="KW-1003">Cell membrane</keyword>
<keyword id="KW-0472">Membrane</keyword>
<keyword id="KW-0812">Transmembrane</keyword>
<keyword id="KW-1133">Transmembrane helix</keyword>
<keyword id="KW-0813">Transport</keyword>
<proteinExistence type="inferred from homology"/>
<feature type="chain" id="PRO_1000200810" description="Multidrug resistance protein MdtH">
    <location>
        <begin position="1"/>
        <end position="402"/>
    </location>
</feature>
<feature type="topological domain" description="Cytoplasmic" evidence="1">
    <location>
        <begin position="1"/>
        <end position="12"/>
    </location>
</feature>
<feature type="transmembrane region" description="Helical" evidence="1">
    <location>
        <begin position="13"/>
        <end position="33"/>
    </location>
</feature>
<feature type="topological domain" description="Periplasmic" evidence="1">
    <location>
        <begin position="34"/>
        <end position="98"/>
    </location>
</feature>
<feature type="transmembrane region" description="Helical" evidence="1">
    <location>
        <begin position="99"/>
        <end position="116"/>
    </location>
</feature>
<feature type="topological domain" description="Cytoplasmic" evidence="1">
    <location>
        <begin position="117"/>
        <end position="138"/>
    </location>
</feature>
<feature type="transmembrane region" description="Helical" evidence="1">
    <location>
        <begin position="139"/>
        <end position="159"/>
    </location>
</feature>
<feature type="topological domain" description="Periplasmic" evidence="1">
    <location>
        <begin position="160"/>
        <end position="164"/>
    </location>
</feature>
<feature type="transmembrane region" description="Helical" evidence="1">
    <location>
        <begin position="165"/>
        <end position="185"/>
    </location>
</feature>
<feature type="topological domain" description="Cytoplasmic" evidence="1">
    <location>
        <begin position="186"/>
        <end position="213"/>
    </location>
</feature>
<feature type="transmembrane region" description="Helical" evidence="1">
    <location>
        <begin position="214"/>
        <end position="234"/>
    </location>
</feature>
<feature type="topological domain" description="Periplasmic" evidence="1">
    <location>
        <begin position="235"/>
        <end position="243"/>
    </location>
</feature>
<feature type="transmembrane region" description="Helical" evidence="1">
    <location>
        <begin position="244"/>
        <end position="264"/>
    </location>
</feature>
<feature type="topological domain" description="Cytoplasmic" evidence="1">
    <location>
        <begin position="265"/>
        <end position="276"/>
    </location>
</feature>
<feature type="transmembrane region" description="Helical" evidence="1">
    <location>
        <begin position="277"/>
        <end position="297"/>
    </location>
</feature>
<feature type="topological domain" description="Periplasmic" evidence="1">
    <location>
        <begin position="298"/>
        <end position="299"/>
    </location>
</feature>
<feature type="transmembrane region" description="Helical" evidence="1">
    <location>
        <begin position="300"/>
        <end position="320"/>
    </location>
</feature>
<feature type="topological domain" description="Cytoplasmic" evidence="1">
    <location>
        <begin position="321"/>
        <end position="339"/>
    </location>
</feature>
<feature type="transmembrane region" description="Helical" evidence="1">
    <location>
        <begin position="340"/>
        <end position="360"/>
    </location>
</feature>
<feature type="topological domain" description="Periplasmic" evidence="1">
    <location>
        <begin position="361"/>
        <end position="367"/>
    </location>
</feature>
<feature type="transmembrane region" description="Helical" evidence="1">
    <location>
        <begin position="368"/>
        <end position="388"/>
    </location>
</feature>
<feature type="topological domain" description="Cytoplasmic" evidence="1">
    <location>
        <begin position="389"/>
        <end position="402"/>
    </location>
</feature>
<organism>
    <name type="scientific">Salmonella paratyphi A (strain AKU_12601)</name>
    <dbReference type="NCBI Taxonomy" id="554290"/>
    <lineage>
        <taxon>Bacteria</taxon>
        <taxon>Pseudomonadati</taxon>
        <taxon>Pseudomonadota</taxon>
        <taxon>Gammaproteobacteria</taxon>
        <taxon>Enterobacterales</taxon>
        <taxon>Enterobacteriaceae</taxon>
        <taxon>Salmonella</taxon>
    </lineage>
</organism>
<dbReference type="EMBL" id="FM200053">
    <property type="protein sequence ID" value="CAR59752.1"/>
    <property type="molecule type" value="Genomic_DNA"/>
</dbReference>
<dbReference type="RefSeq" id="WP_000092178.1">
    <property type="nucleotide sequence ID" value="NC_011147.1"/>
</dbReference>
<dbReference type="SMR" id="B5BBC3"/>
<dbReference type="KEGG" id="sek:SSPA1567"/>
<dbReference type="HOGENOM" id="CLU_001265_60_2_6"/>
<dbReference type="Proteomes" id="UP000001869">
    <property type="component" value="Chromosome"/>
</dbReference>
<dbReference type="GO" id="GO:0005886">
    <property type="term" value="C:plasma membrane"/>
    <property type="evidence" value="ECO:0007669"/>
    <property type="project" value="UniProtKB-SubCell"/>
</dbReference>
<dbReference type="GO" id="GO:0022857">
    <property type="term" value="F:transmembrane transporter activity"/>
    <property type="evidence" value="ECO:0007669"/>
    <property type="project" value="UniProtKB-UniRule"/>
</dbReference>
<dbReference type="CDD" id="cd17329">
    <property type="entry name" value="MFS_MdtH_MDR_like"/>
    <property type="match status" value="1"/>
</dbReference>
<dbReference type="FunFam" id="1.20.1250.20:FF:000039">
    <property type="entry name" value="Multidrug resistance protein MdtH"/>
    <property type="match status" value="1"/>
</dbReference>
<dbReference type="Gene3D" id="1.20.1250.20">
    <property type="entry name" value="MFS general substrate transporter like domains"/>
    <property type="match status" value="1"/>
</dbReference>
<dbReference type="HAMAP" id="MF_01529">
    <property type="entry name" value="MFS_MdtH"/>
    <property type="match status" value="1"/>
</dbReference>
<dbReference type="InterPro" id="IPR011701">
    <property type="entry name" value="MFS"/>
</dbReference>
<dbReference type="InterPro" id="IPR020846">
    <property type="entry name" value="MFS_dom"/>
</dbReference>
<dbReference type="InterPro" id="IPR036259">
    <property type="entry name" value="MFS_trans_sf"/>
</dbReference>
<dbReference type="InterPro" id="IPR050171">
    <property type="entry name" value="MFS_Transporters"/>
</dbReference>
<dbReference type="InterPro" id="IPR022855">
    <property type="entry name" value="Multidrug-R_MdtH"/>
</dbReference>
<dbReference type="NCBIfam" id="NF008650">
    <property type="entry name" value="PRK11646.1"/>
    <property type="match status" value="1"/>
</dbReference>
<dbReference type="PANTHER" id="PTHR23517:SF2">
    <property type="entry name" value="MULTIDRUG RESISTANCE PROTEIN MDTH"/>
    <property type="match status" value="1"/>
</dbReference>
<dbReference type="PANTHER" id="PTHR23517">
    <property type="entry name" value="RESISTANCE PROTEIN MDTM, PUTATIVE-RELATED-RELATED"/>
    <property type="match status" value="1"/>
</dbReference>
<dbReference type="Pfam" id="PF07690">
    <property type="entry name" value="MFS_1"/>
    <property type="match status" value="1"/>
</dbReference>
<dbReference type="SUPFAM" id="SSF103473">
    <property type="entry name" value="MFS general substrate transporter"/>
    <property type="match status" value="1"/>
</dbReference>
<dbReference type="PROSITE" id="PS50850">
    <property type="entry name" value="MFS"/>
    <property type="match status" value="1"/>
</dbReference>